<organism>
    <name type="scientific">Rhizobium etli (strain ATCC 51251 / DSM 11541 / JCM 21823 / NBRC 15573 / CFN 42)</name>
    <dbReference type="NCBI Taxonomy" id="347834"/>
    <lineage>
        <taxon>Bacteria</taxon>
        <taxon>Pseudomonadati</taxon>
        <taxon>Pseudomonadota</taxon>
        <taxon>Alphaproteobacteria</taxon>
        <taxon>Hyphomicrobiales</taxon>
        <taxon>Rhizobiaceae</taxon>
        <taxon>Rhizobium/Agrobacterium group</taxon>
        <taxon>Rhizobium</taxon>
    </lineage>
</organism>
<reference key="1">
    <citation type="journal article" date="2006" name="Proc. Natl. Acad. Sci. U.S.A.">
        <title>The partitioned Rhizobium etli genome: genetic and metabolic redundancy in seven interacting replicons.</title>
        <authorList>
            <person name="Gonzalez V."/>
            <person name="Santamaria R.I."/>
            <person name="Bustos P."/>
            <person name="Hernandez-Gonzalez I."/>
            <person name="Medrano-Soto A."/>
            <person name="Moreno-Hagelsieb G."/>
            <person name="Janga S.C."/>
            <person name="Ramirez M.A."/>
            <person name="Jimenez-Jacinto V."/>
            <person name="Collado-Vides J."/>
            <person name="Davila G."/>
        </authorList>
    </citation>
    <scope>NUCLEOTIDE SEQUENCE [LARGE SCALE GENOMIC DNA]</scope>
    <source>
        <strain>ATCC 51251 / DSM 11541 / JCM 21823 / NBRC 15573 / CFN 42</strain>
    </source>
</reference>
<name>HSLU_RHIEC</name>
<protein>
    <recommendedName>
        <fullName evidence="1">ATP-dependent protease ATPase subunit HslU</fullName>
    </recommendedName>
    <alternativeName>
        <fullName evidence="1">Unfoldase HslU</fullName>
    </alternativeName>
</protein>
<comment type="function">
    <text evidence="1">ATPase subunit of a proteasome-like degradation complex; this subunit has chaperone activity. The binding of ATP and its subsequent hydrolysis by HslU are essential for unfolding of protein substrates subsequently hydrolyzed by HslV. HslU recognizes the N-terminal part of its protein substrates and unfolds these before they are guided to HslV for hydrolysis.</text>
</comment>
<comment type="subunit">
    <text evidence="1">A double ring-shaped homohexamer of HslV is capped on each side by a ring-shaped HslU homohexamer. The assembly of the HslU/HslV complex is dependent on binding of ATP.</text>
</comment>
<comment type="subcellular location">
    <subcellularLocation>
        <location evidence="1">Cytoplasm</location>
    </subcellularLocation>
</comment>
<comment type="similarity">
    <text evidence="1">Belongs to the ClpX chaperone family. HslU subfamily.</text>
</comment>
<feature type="chain" id="PRO_1000012784" description="ATP-dependent protease ATPase subunit HslU">
    <location>
        <begin position="1"/>
        <end position="435"/>
    </location>
</feature>
<feature type="binding site" evidence="1">
    <location>
        <position position="18"/>
    </location>
    <ligand>
        <name>ATP</name>
        <dbReference type="ChEBI" id="CHEBI:30616"/>
    </ligand>
</feature>
<feature type="binding site" evidence="1">
    <location>
        <begin position="60"/>
        <end position="65"/>
    </location>
    <ligand>
        <name>ATP</name>
        <dbReference type="ChEBI" id="CHEBI:30616"/>
    </ligand>
</feature>
<feature type="binding site" evidence="1">
    <location>
        <position position="248"/>
    </location>
    <ligand>
        <name>ATP</name>
        <dbReference type="ChEBI" id="CHEBI:30616"/>
    </ligand>
</feature>
<feature type="binding site" evidence="1">
    <location>
        <position position="313"/>
    </location>
    <ligand>
        <name>ATP</name>
        <dbReference type="ChEBI" id="CHEBI:30616"/>
    </ligand>
</feature>
<feature type="binding site" evidence="1">
    <location>
        <position position="385"/>
    </location>
    <ligand>
        <name>ATP</name>
        <dbReference type="ChEBI" id="CHEBI:30616"/>
    </ligand>
</feature>
<sequence length="435" mass="48041">MTTFSPREIVSELDRYIIGQHDAKRAVAIALRNRWRRQQLDPSLRDEVMPKNILMIGPTGVGKTEISRRLAKLAGAPFIKVEATKFTEVGYVGRDVEQIIRDLVEVGIGLMREKKRAEVQAKAHVSAEERVLDALVGTTASPATRENFRKKLRDGELDDKEIDIEVADAGSGMGGFEIPGMPGANIGVLNLSEMFGKAMGGRTKKVRTTVKASYTDLIRDESDKLIDNEVIQREAVRATENDGIVFLDEIDKIAARDGGMGAGVSREGVQRDLLPLVEGTTVSTKYGPVKTDHILFIASGAFHVSKPSDLLPELQGRLPIRVELRPLNKEDFRRILTETEASLIRQYRALMETENLNLDFTDDAIDALADVAVHLNSSVENIGARRLQTVMERVLDDISYNAPDRAGAAITIDAAYVREHVGDLAQNTDLSRFIL</sequence>
<keyword id="KW-0067">ATP-binding</keyword>
<keyword id="KW-0143">Chaperone</keyword>
<keyword id="KW-0963">Cytoplasm</keyword>
<keyword id="KW-0547">Nucleotide-binding</keyword>
<keyword id="KW-1185">Reference proteome</keyword>
<keyword id="KW-0346">Stress response</keyword>
<proteinExistence type="inferred from homology"/>
<evidence type="ECO:0000255" key="1">
    <source>
        <dbReference type="HAMAP-Rule" id="MF_00249"/>
    </source>
</evidence>
<gene>
    <name evidence="1" type="primary">hslU</name>
    <name type="ordered locus">RHE_CH00049</name>
</gene>
<accession>Q2KE54</accession>
<dbReference type="EMBL" id="CP000133">
    <property type="protein sequence ID" value="ABC88882.1"/>
    <property type="molecule type" value="Genomic_DNA"/>
</dbReference>
<dbReference type="RefSeq" id="WP_011423453.1">
    <property type="nucleotide sequence ID" value="NC_007761.1"/>
</dbReference>
<dbReference type="SMR" id="Q2KE54"/>
<dbReference type="KEGG" id="ret:RHE_CH00049"/>
<dbReference type="eggNOG" id="COG1220">
    <property type="taxonomic scope" value="Bacteria"/>
</dbReference>
<dbReference type="HOGENOM" id="CLU_033123_0_0_5"/>
<dbReference type="OrthoDB" id="9804062at2"/>
<dbReference type="Proteomes" id="UP000001936">
    <property type="component" value="Chromosome"/>
</dbReference>
<dbReference type="GO" id="GO:0009376">
    <property type="term" value="C:HslUV protease complex"/>
    <property type="evidence" value="ECO:0007669"/>
    <property type="project" value="UniProtKB-UniRule"/>
</dbReference>
<dbReference type="GO" id="GO:0005524">
    <property type="term" value="F:ATP binding"/>
    <property type="evidence" value="ECO:0007669"/>
    <property type="project" value="UniProtKB-UniRule"/>
</dbReference>
<dbReference type="GO" id="GO:0016887">
    <property type="term" value="F:ATP hydrolysis activity"/>
    <property type="evidence" value="ECO:0007669"/>
    <property type="project" value="InterPro"/>
</dbReference>
<dbReference type="GO" id="GO:0008233">
    <property type="term" value="F:peptidase activity"/>
    <property type="evidence" value="ECO:0007669"/>
    <property type="project" value="InterPro"/>
</dbReference>
<dbReference type="GO" id="GO:0036402">
    <property type="term" value="F:proteasome-activating activity"/>
    <property type="evidence" value="ECO:0007669"/>
    <property type="project" value="UniProtKB-UniRule"/>
</dbReference>
<dbReference type="GO" id="GO:0043335">
    <property type="term" value="P:protein unfolding"/>
    <property type="evidence" value="ECO:0007669"/>
    <property type="project" value="UniProtKB-UniRule"/>
</dbReference>
<dbReference type="GO" id="GO:0051603">
    <property type="term" value="P:proteolysis involved in protein catabolic process"/>
    <property type="evidence" value="ECO:0007669"/>
    <property type="project" value="TreeGrafter"/>
</dbReference>
<dbReference type="CDD" id="cd19498">
    <property type="entry name" value="RecA-like_HslU"/>
    <property type="match status" value="1"/>
</dbReference>
<dbReference type="FunFam" id="3.40.50.300:FF:000213">
    <property type="entry name" value="ATP-dependent protease ATPase subunit HslU"/>
    <property type="match status" value="1"/>
</dbReference>
<dbReference type="FunFam" id="3.40.50.300:FF:000220">
    <property type="entry name" value="ATP-dependent protease ATPase subunit HslU"/>
    <property type="match status" value="1"/>
</dbReference>
<dbReference type="Gene3D" id="1.10.8.60">
    <property type="match status" value="1"/>
</dbReference>
<dbReference type="Gene3D" id="3.40.50.300">
    <property type="entry name" value="P-loop containing nucleotide triphosphate hydrolases"/>
    <property type="match status" value="2"/>
</dbReference>
<dbReference type="HAMAP" id="MF_00249">
    <property type="entry name" value="HslU"/>
    <property type="match status" value="1"/>
</dbReference>
<dbReference type="InterPro" id="IPR003593">
    <property type="entry name" value="AAA+_ATPase"/>
</dbReference>
<dbReference type="InterPro" id="IPR050052">
    <property type="entry name" value="ATP-dep_Clp_protease_ClpX"/>
</dbReference>
<dbReference type="InterPro" id="IPR003959">
    <property type="entry name" value="ATPase_AAA_core"/>
</dbReference>
<dbReference type="InterPro" id="IPR019489">
    <property type="entry name" value="Clp_ATPase_C"/>
</dbReference>
<dbReference type="InterPro" id="IPR004491">
    <property type="entry name" value="HslU"/>
</dbReference>
<dbReference type="InterPro" id="IPR027417">
    <property type="entry name" value="P-loop_NTPase"/>
</dbReference>
<dbReference type="NCBIfam" id="TIGR00390">
    <property type="entry name" value="hslU"/>
    <property type="match status" value="1"/>
</dbReference>
<dbReference type="NCBIfam" id="NF003544">
    <property type="entry name" value="PRK05201.1"/>
    <property type="match status" value="1"/>
</dbReference>
<dbReference type="PANTHER" id="PTHR48102">
    <property type="entry name" value="ATP-DEPENDENT CLP PROTEASE ATP-BINDING SUBUNIT CLPX-LIKE, MITOCHONDRIAL-RELATED"/>
    <property type="match status" value="1"/>
</dbReference>
<dbReference type="PANTHER" id="PTHR48102:SF3">
    <property type="entry name" value="ATP-DEPENDENT PROTEASE ATPASE SUBUNIT HSLU"/>
    <property type="match status" value="1"/>
</dbReference>
<dbReference type="Pfam" id="PF00004">
    <property type="entry name" value="AAA"/>
    <property type="match status" value="1"/>
</dbReference>
<dbReference type="Pfam" id="PF07724">
    <property type="entry name" value="AAA_2"/>
    <property type="match status" value="1"/>
</dbReference>
<dbReference type="SMART" id="SM00382">
    <property type="entry name" value="AAA"/>
    <property type="match status" value="1"/>
</dbReference>
<dbReference type="SMART" id="SM01086">
    <property type="entry name" value="ClpB_D2-small"/>
    <property type="match status" value="1"/>
</dbReference>
<dbReference type="SUPFAM" id="SSF52540">
    <property type="entry name" value="P-loop containing nucleoside triphosphate hydrolases"/>
    <property type="match status" value="1"/>
</dbReference>